<gene>
    <name type="primary">Asns</name>
</gene>
<accession>P49088</accession>
<accession>Q66HR8</accession>
<name>ASNS_RAT</name>
<proteinExistence type="evidence at transcript level"/>
<protein>
    <recommendedName>
        <fullName>Asparagine synthetase [glutamine-hydrolyzing]</fullName>
        <ecNumber>6.3.5.4</ecNumber>
    </recommendedName>
    <alternativeName>
        <fullName>Glutamine-dependent asparagine synthetase</fullName>
    </alternativeName>
</protein>
<organism>
    <name type="scientific">Rattus norvegicus</name>
    <name type="common">Rat</name>
    <dbReference type="NCBI Taxonomy" id="10116"/>
    <lineage>
        <taxon>Eukaryota</taxon>
        <taxon>Metazoa</taxon>
        <taxon>Chordata</taxon>
        <taxon>Craniata</taxon>
        <taxon>Vertebrata</taxon>
        <taxon>Euteleostomi</taxon>
        <taxon>Mammalia</taxon>
        <taxon>Eutheria</taxon>
        <taxon>Euarchontoglires</taxon>
        <taxon>Glires</taxon>
        <taxon>Rodentia</taxon>
        <taxon>Myomorpha</taxon>
        <taxon>Muroidea</taxon>
        <taxon>Muridae</taxon>
        <taxon>Murinae</taxon>
        <taxon>Rattus</taxon>
    </lineage>
</organism>
<sequence length="561" mass="64247">MCGIWALFGSDDCLSVQCLSAMKIAHRGPDAFRFENVNGYTNCCFGFHRLAVVDPLFGMQPIRVRKYPYLWLCYNGEIYNHKALQQRFEFEYQTNVDGEIILHLYDKGGIEKTICMLDGVFAFILLDTANKKVFLGRDTYGVRPLFKALTEDGFLAVCSEAKGLVSLKHSTTPFLKVEPFLPGHYEVLDLKPNGKVASVEMVKYHHCTDEPLHAIYDSVEKLFPGFEIETVKNNLRILFNNAIKKRLMTDRRIGCLLSGGLDSSLVAASLLKQLKEAQVPYALQTFAIGMEDSPDLLAARKVANYIGSEHHEVLFNSEEGIQSLDEVIFSLETYDITTVRASVGMYLISKYIRKNTDSVVIFSGEGSDELTQGYIYFHKAPSPEKAEEESERLLKELYLFDVLRADRTTAAHGLELRVPFLDHRFSSYYLSLPPEMRIPKDGIEKHLLRETFEDSNLLPKEILWRPKEAFSDGITSVKNSWFKILQDFVEHQVDDAMMSEASQKFPFNTPQTKEGYYYRQIFEHHYPGRADWLTHYWMPKWINATDPSARTLTHYKSTAKA</sequence>
<keyword id="KW-0007">Acetylation</keyword>
<keyword id="KW-0028">Amino-acid biosynthesis</keyword>
<keyword id="KW-0061">Asparagine biosynthesis</keyword>
<keyword id="KW-0067">ATP-binding</keyword>
<keyword id="KW-0315">Glutamine amidotransferase</keyword>
<keyword id="KW-0436">Ligase</keyword>
<keyword id="KW-0547">Nucleotide-binding</keyword>
<keyword id="KW-0597">Phosphoprotein</keyword>
<keyword id="KW-1185">Reference proteome</keyword>
<evidence type="ECO:0000250" key="1"/>
<evidence type="ECO:0000250" key="2">
    <source>
        <dbReference type="UniProtKB" id="P08243"/>
    </source>
</evidence>
<evidence type="ECO:0000255" key="3">
    <source>
        <dbReference type="PROSITE-ProRule" id="PRU00609"/>
    </source>
</evidence>
<evidence type="ECO:0000305" key="4"/>
<dbReference type="EC" id="6.3.5.4"/>
<dbReference type="EMBL" id="U07202">
    <property type="protein sequence ID" value="AAA77672.1"/>
    <property type="molecule type" value="mRNA"/>
</dbReference>
<dbReference type="EMBL" id="U07201">
    <property type="protein sequence ID" value="AAA77671.1"/>
    <property type="molecule type" value="mRNA"/>
</dbReference>
<dbReference type="EMBL" id="BC081719">
    <property type="protein sequence ID" value="AAH81719.1"/>
    <property type="molecule type" value="mRNA"/>
</dbReference>
<dbReference type="PIR" id="S53447">
    <property type="entry name" value="S53447"/>
</dbReference>
<dbReference type="RefSeq" id="NP_037211.2">
    <property type="nucleotide sequence ID" value="NM_013079.2"/>
</dbReference>
<dbReference type="RefSeq" id="XP_006236151.1">
    <property type="nucleotide sequence ID" value="XM_006236089.5"/>
</dbReference>
<dbReference type="SMR" id="P49088"/>
<dbReference type="BioGRID" id="247641">
    <property type="interactions" value="1"/>
</dbReference>
<dbReference type="FunCoup" id="P49088">
    <property type="interactions" value="910"/>
</dbReference>
<dbReference type="STRING" id="10116.ENSRNOP00000010079"/>
<dbReference type="ChEMBL" id="CHEMBL2303"/>
<dbReference type="MEROPS" id="C44.974"/>
<dbReference type="iPTMnet" id="P49088"/>
<dbReference type="PhosphoSitePlus" id="P49088"/>
<dbReference type="jPOST" id="P49088"/>
<dbReference type="PaxDb" id="10116-ENSRNOP00000010079"/>
<dbReference type="Ensembl" id="ENSRNOT00000010079.5">
    <property type="protein sequence ID" value="ENSRNOP00000010079.3"/>
    <property type="gene ID" value="ENSRNOG00000007546.7"/>
</dbReference>
<dbReference type="GeneID" id="25612"/>
<dbReference type="KEGG" id="rno:25612"/>
<dbReference type="UCSC" id="RGD:2162">
    <property type="organism name" value="rat"/>
</dbReference>
<dbReference type="AGR" id="RGD:2162"/>
<dbReference type="CTD" id="440"/>
<dbReference type="RGD" id="2162">
    <property type="gene designation" value="Asns"/>
</dbReference>
<dbReference type="eggNOG" id="KOG0571">
    <property type="taxonomic scope" value="Eukaryota"/>
</dbReference>
<dbReference type="GeneTree" id="ENSGT00390000001994"/>
<dbReference type="HOGENOM" id="CLU_014658_2_1_1"/>
<dbReference type="InParanoid" id="P49088"/>
<dbReference type="OMA" id="GIVCAFD"/>
<dbReference type="OrthoDB" id="409189at2759"/>
<dbReference type="PhylomeDB" id="P49088"/>
<dbReference type="TreeFam" id="TF300603"/>
<dbReference type="BioCyc" id="MetaCyc:MONOMER-13063"/>
<dbReference type="Reactome" id="R-RNO-8963693">
    <property type="pathway name" value="Aspartate and asparagine metabolism"/>
</dbReference>
<dbReference type="UniPathway" id="UPA00134">
    <property type="reaction ID" value="UER00195"/>
</dbReference>
<dbReference type="PRO" id="PR:P49088"/>
<dbReference type="Proteomes" id="UP000002494">
    <property type="component" value="Chromosome 4"/>
</dbReference>
<dbReference type="Bgee" id="ENSRNOG00000007546">
    <property type="expression patterns" value="Expressed in pancreas and 20 other cell types or tissues"/>
</dbReference>
<dbReference type="GO" id="GO:0005829">
    <property type="term" value="C:cytosol"/>
    <property type="evidence" value="ECO:0000318"/>
    <property type="project" value="GO_Central"/>
</dbReference>
<dbReference type="GO" id="GO:0004066">
    <property type="term" value="F:asparagine synthase (glutamine-hydrolyzing) activity"/>
    <property type="evidence" value="ECO:0000314"/>
    <property type="project" value="RGD"/>
</dbReference>
<dbReference type="GO" id="GO:0005524">
    <property type="term" value="F:ATP binding"/>
    <property type="evidence" value="ECO:0007669"/>
    <property type="project" value="UniProtKB-KW"/>
</dbReference>
<dbReference type="GO" id="GO:0042802">
    <property type="term" value="F:identical protein binding"/>
    <property type="evidence" value="ECO:0000353"/>
    <property type="project" value="RGD"/>
</dbReference>
<dbReference type="GO" id="GO:0006520">
    <property type="term" value="P:amino acid metabolic process"/>
    <property type="evidence" value="ECO:0000270"/>
    <property type="project" value="RGD"/>
</dbReference>
<dbReference type="GO" id="GO:0006529">
    <property type="term" value="P:asparagine biosynthetic process"/>
    <property type="evidence" value="ECO:0000314"/>
    <property type="project" value="RGD"/>
</dbReference>
<dbReference type="GO" id="GO:0042149">
    <property type="term" value="P:cellular response to glucose starvation"/>
    <property type="evidence" value="ECO:0000270"/>
    <property type="project" value="RGD"/>
</dbReference>
<dbReference type="GO" id="GO:0032870">
    <property type="term" value="P:cellular response to hormone stimulus"/>
    <property type="evidence" value="ECO:0000270"/>
    <property type="project" value="RGD"/>
</dbReference>
<dbReference type="GO" id="GO:0070981">
    <property type="term" value="P:L-asparagine biosynthetic process"/>
    <property type="evidence" value="ECO:0007669"/>
    <property type="project" value="UniProtKB-UniPathway"/>
</dbReference>
<dbReference type="GO" id="GO:0001889">
    <property type="term" value="P:liver development"/>
    <property type="evidence" value="ECO:0000270"/>
    <property type="project" value="RGD"/>
</dbReference>
<dbReference type="GO" id="GO:0043066">
    <property type="term" value="P:negative regulation of apoptotic process"/>
    <property type="evidence" value="ECO:0000266"/>
    <property type="project" value="RGD"/>
</dbReference>
<dbReference type="GO" id="GO:0045931">
    <property type="term" value="P:positive regulation of mitotic cell cycle"/>
    <property type="evidence" value="ECO:0000266"/>
    <property type="project" value="RGD"/>
</dbReference>
<dbReference type="GO" id="GO:1904044">
    <property type="term" value="P:response to aldosterone"/>
    <property type="evidence" value="ECO:0000270"/>
    <property type="project" value="RGD"/>
</dbReference>
<dbReference type="GO" id="GO:0043200">
    <property type="term" value="P:response to amino acid"/>
    <property type="evidence" value="ECO:0000270"/>
    <property type="project" value="RGD"/>
</dbReference>
<dbReference type="GO" id="GO:0032354">
    <property type="term" value="P:response to follicle-stimulating hormone"/>
    <property type="evidence" value="ECO:0000270"/>
    <property type="project" value="RGD"/>
</dbReference>
<dbReference type="GO" id="GO:0009416">
    <property type="term" value="P:response to light stimulus"/>
    <property type="evidence" value="ECO:0000270"/>
    <property type="project" value="RGD"/>
</dbReference>
<dbReference type="GO" id="GO:0009612">
    <property type="term" value="P:response to mechanical stimulus"/>
    <property type="evidence" value="ECO:0000270"/>
    <property type="project" value="RGD"/>
</dbReference>
<dbReference type="GO" id="GO:0031667">
    <property type="term" value="P:response to nutrient levels"/>
    <property type="evidence" value="ECO:0000270"/>
    <property type="project" value="RGD"/>
</dbReference>
<dbReference type="GO" id="GO:0009636">
    <property type="term" value="P:response to toxic substance"/>
    <property type="evidence" value="ECO:0000270"/>
    <property type="project" value="RGD"/>
</dbReference>
<dbReference type="CDD" id="cd01991">
    <property type="entry name" value="Asn_synthase_B_C"/>
    <property type="match status" value="1"/>
</dbReference>
<dbReference type="CDD" id="cd00712">
    <property type="entry name" value="AsnB"/>
    <property type="match status" value="1"/>
</dbReference>
<dbReference type="FunFam" id="3.60.20.10:FF:000039">
    <property type="entry name" value="Asparagine synthetase [glutamine-hydrolyzing]"/>
    <property type="match status" value="1"/>
</dbReference>
<dbReference type="FunFam" id="3.40.50.620:FF:000090">
    <property type="entry name" value="asparagine synthetase [glutamine-hydrolyzing]"/>
    <property type="match status" value="1"/>
</dbReference>
<dbReference type="Gene3D" id="3.60.20.10">
    <property type="entry name" value="Glutamine Phosphoribosylpyrophosphate, subunit 1, domain 1"/>
    <property type="match status" value="1"/>
</dbReference>
<dbReference type="Gene3D" id="3.40.50.620">
    <property type="entry name" value="HUPs"/>
    <property type="match status" value="1"/>
</dbReference>
<dbReference type="InterPro" id="IPR006426">
    <property type="entry name" value="Asn_synth_AEB"/>
</dbReference>
<dbReference type="InterPro" id="IPR001962">
    <property type="entry name" value="Asn_synthase"/>
</dbReference>
<dbReference type="InterPro" id="IPR050795">
    <property type="entry name" value="Asn_Synthetase"/>
</dbReference>
<dbReference type="InterPro" id="IPR033738">
    <property type="entry name" value="AsnB_N"/>
</dbReference>
<dbReference type="InterPro" id="IPR017932">
    <property type="entry name" value="GATase_2_dom"/>
</dbReference>
<dbReference type="InterPro" id="IPR029055">
    <property type="entry name" value="Ntn_hydrolases_N"/>
</dbReference>
<dbReference type="InterPro" id="IPR014729">
    <property type="entry name" value="Rossmann-like_a/b/a_fold"/>
</dbReference>
<dbReference type="NCBIfam" id="TIGR01536">
    <property type="entry name" value="asn_synth_AEB"/>
    <property type="match status" value="1"/>
</dbReference>
<dbReference type="NCBIfam" id="NF006949">
    <property type="entry name" value="PRK09431.1"/>
    <property type="match status" value="1"/>
</dbReference>
<dbReference type="PANTHER" id="PTHR11772">
    <property type="entry name" value="ASPARAGINE SYNTHETASE"/>
    <property type="match status" value="1"/>
</dbReference>
<dbReference type="PANTHER" id="PTHR11772:SF23">
    <property type="entry name" value="ASPARAGINE SYNTHETASE [GLUTAMINE-HYDROLYZING]"/>
    <property type="match status" value="1"/>
</dbReference>
<dbReference type="Pfam" id="PF00733">
    <property type="entry name" value="Asn_synthase"/>
    <property type="match status" value="1"/>
</dbReference>
<dbReference type="Pfam" id="PF13537">
    <property type="entry name" value="GATase_7"/>
    <property type="match status" value="1"/>
</dbReference>
<dbReference type="PIRSF" id="PIRSF001589">
    <property type="entry name" value="Asn_synthetase_glu-h"/>
    <property type="match status" value="1"/>
</dbReference>
<dbReference type="SUPFAM" id="SSF52402">
    <property type="entry name" value="Adenine nucleotide alpha hydrolases-like"/>
    <property type="match status" value="1"/>
</dbReference>
<dbReference type="SUPFAM" id="SSF56235">
    <property type="entry name" value="N-terminal nucleophile aminohydrolases (Ntn hydrolases)"/>
    <property type="match status" value="1"/>
</dbReference>
<dbReference type="PROSITE" id="PS51278">
    <property type="entry name" value="GATASE_TYPE_2"/>
    <property type="match status" value="1"/>
</dbReference>
<reference key="1">
    <citation type="journal article" date="1994" name="Biochem. J.">
        <title>Cloning of rat asparagine synthetase and specificity of the amino acid-dependent control of its mRNA content.</title>
        <authorList>
            <person name="Hutson R.G."/>
            <person name="Kilberg M.S."/>
        </authorList>
    </citation>
    <scope>NUCLEOTIDE SEQUENCE [MRNA]</scope>
</reference>
<reference key="2">
    <citation type="journal article" date="2004" name="Genome Res.">
        <title>The status, quality, and expansion of the NIH full-length cDNA project: the Mammalian Gene Collection (MGC).</title>
        <authorList>
            <consortium name="The MGC Project Team"/>
        </authorList>
    </citation>
    <scope>NUCLEOTIDE SEQUENCE [LARGE SCALE MRNA]</scope>
    <source>
        <tissue>Testis</tissue>
    </source>
</reference>
<comment type="catalytic activity">
    <reaction>
        <text>L-aspartate + L-glutamine + ATP + H2O = L-asparagine + L-glutamate + AMP + diphosphate + H(+)</text>
        <dbReference type="Rhea" id="RHEA:12228"/>
        <dbReference type="ChEBI" id="CHEBI:15377"/>
        <dbReference type="ChEBI" id="CHEBI:15378"/>
        <dbReference type="ChEBI" id="CHEBI:29985"/>
        <dbReference type="ChEBI" id="CHEBI:29991"/>
        <dbReference type="ChEBI" id="CHEBI:30616"/>
        <dbReference type="ChEBI" id="CHEBI:33019"/>
        <dbReference type="ChEBI" id="CHEBI:58048"/>
        <dbReference type="ChEBI" id="CHEBI:58359"/>
        <dbReference type="ChEBI" id="CHEBI:456215"/>
        <dbReference type="EC" id="6.3.5.4"/>
    </reaction>
</comment>
<comment type="pathway">
    <text>Amino-acid biosynthesis; L-asparagine biosynthesis; L-asparagine from L-aspartate (L-Gln route): step 1/1.</text>
</comment>
<feature type="initiator methionine" description="Removed" evidence="1">
    <location>
        <position position="1"/>
    </location>
</feature>
<feature type="chain" id="PRO_0000056914" description="Asparagine synthetase [glutamine-hydrolyzing]">
    <location>
        <begin position="2"/>
        <end position="561"/>
    </location>
</feature>
<feature type="domain" description="Glutamine amidotransferase type-2" evidence="3">
    <location>
        <begin position="2"/>
        <end position="191"/>
    </location>
</feature>
<feature type="domain" description="Asparagine synthetase">
    <location>
        <begin position="213"/>
        <end position="536"/>
    </location>
</feature>
<feature type="active site" description="For GATase activity" evidence="1">
    <location>
        <position position="2"/>
    </location>
</feature>
<feature type="binding site" evidence="1">
    <location>
        <begin position="49"/>
        <end position="53"/>
    </location>
    <ligand>
        <name>L-glutamine</name>
        <dbReference type="ChEBI" id="CHEBI:58359"/>
    </ligand>
</feature>
<feature type="binding site" evidence="1">
    <location>
        <begin position="75"/>
        <end position="77"/>
    </location>
    <ligand>
        <name>L-glutamine</name>
        <dbReference type="ChEBI" id="CHEBI:58359"/>
    </ligand>
</feature>
<feature type="binding site" evidence="1">
    <location>
        <position position="97"/>
    </location>
    <ligand>
        <name>L-glutamine</name>
        <dbReference type="ChEBI" id="CHEBI:58359"/>
    </ligand>
</feature>
<feature type="binding site" evidence="1">
    <location>
        <position position="256"/>
    </location>
    <ligand>
        <name>ATP</name>
        <dbReference type="ChEBI" id="CHEBI:30616"/>
    </ligand>
</feature>
<feature type="binding site" evidence="1">
    <location>
        <position position="288"/>
    </location>
    <ligand>
        <name>ATP</name>
        <dbReference type="ChEBI" id="CHEBI:30616"/>
    </ligand>
</feature>
<feature type="binding site" evidence="1">
    <location>
        <begin position="363"/>
        <end position="364"/>
    </location>
    <ligand>
        <name>ATP</name>
        <dbReference type="ChEBI" id="CHEBI:30616"/>
    </ligand>
</feature>
<feature type="site" description="Important for beta-aspartyl-AMP intermediate formation" evidence="1">
    <location>
        <position position="365"/>
    </location>
</feature>
<feature type="modified residue" description="N6-acetyllysine" evidence="2">
    <location>
        <position position="385"/>
    </location>
</feature>
<feature type="modified residue" description="Phosphothreonine" evidence="2">
    <location>
        <position position="545"/>
    </location>
</feature>
<feature type="modified residue" description="Phosphoserine" evidence="2">
    <location>
        <position position="557"/>
    </location>
</feature>
<feature type="sequence conflict" description="In Ref. 1; AAA77672/AAA77671." evidence="4" ref="1">
    <original>S</original>
    <variation>P</variation>
    <location>
        <position position="330"/>
    </location>
</feature>
<feature type="sequence conflict" description="In Ref. 1; AAA77672/AAA77671." evidence="4" ref="1">
    <original>H</original>
    <variation>Y</variation>
    <location>
        <position position="491"/>
    </location>
</feature>